<accession>Q1GN81</accession>
<feature type="chain" id="PRO_0000260144" description="Small ribosomal subunit protein bS20">
    <location>
        <begin position="1"/>
        <end position="87"/>
    </location>
</feature>
<name>RS20_SPHAL</name>
<reference key="1">
    <citation type="journal article" date="2009" name="Proc. Natl. Acad. Sci. U.S.A.">
        <title>The genomic basis of trophic strategy in marine bacteria.</title>
        <authorList>
            <person name="Lauro F.M."/>
            <person name="McDougald D."/>
            <person name="Thomas T."/>
            <person name="Williams T.J."/>
            <person name="Egan S."/>
            <person name="Rice S."/>
            <person name="DeMaere M.Z."/>
            <person name="Ting L."/>
            <person name="Ertan H."/>
            <person name="Johnson J."/>
            <person name="Ferriera S."/>
            <person name="Lapidus A."/>
            <person name="Anderson I."/>
            <person name="Kyrpides N."/>
            <person name="Munk A.C."/>
            <person name="Detter C."/>
            <person name="Han C.S."/>
            <person name="Brown M.V."/>
            <person name="Robb F.T."/>
            <person name="Kjelleberg S."/>
            <person name="Cavicchioli R."/>
        </authorList>
    </citation>
    <scope>NUCLEOTIDE SEQUENCE [LARGE SCALE GENOMIC DNA]</scope>
    <source>
        <strain>DSM 13593 / LMG 18877 / RB2256</strain>
    </source>
</reference>
<sequence>MANTPQAKKRIRRNQARAVVNKNRVSRIRTLVKKVEAAVAAGDKDAAATALKAAQPEMARGVAKGVLHKNTVARKYSRLTKSVNAIA</sequence>
<evidence type="ECO:0000255" key="1">
    <source>
        <dbReference type="HAMAP-Rule" id="MF_00500"/>
    </source>
</evidence>
<evidence type="ECO:0000305" key="2"/>
<protein>
    <recommendedName>
        <fullName evidence="1">Small ribosomal subunit protein bS20</fullName>
    </recommendedName>
    <alternativeName>
        <fullName evidence="2">30S ribosomal protein S20</fullName>
    </alternativeName>
</protein>
<gene>
    <name evidence="1" type="primary">rpsT</name>
    <name type="ordered locus">Sala_3188</name>
</gene>
<proteinExistence type="inferred from homology"/>
<dbReference type="EMBL" id="CP000356">
    <property type="protein sequence ID" value="ABF54891.1"/>
    <property type="molecule type" value="Genomic_DNA"/>
</dbReference>
<dbReference type="RefSeq" id="WP_011543453.1">
    <property type="nucleotide sequence ID" value="NC_008048.1"/>
</dbReference>
<dbReference type="SMR" id="Q1GN81"/>
<dbReference type="STRING" id="317655.Sala_3188"/>
<dbReference type="KEGG" id="sal:Sala_3188"/>
<dbReference type="eggNOG" id="COG0268">
    <property type="taxonomic scope" value="Bacteria"/>
</dbReference>
<dbReference type="HOGENOM" id="CLU_160655_3_0_5"/>
<dbReference type="OrthoDB" id="9807974at2"/>
<dbReference type="Proteomes" id="UP000006578">
    <property type="component" value="Chromosome"/>
</dbReference>
<dbReference type="GO" id="GO:0015935">
    <property type="term" value="C:small ribosomal subunit"/>
    <property type="evidence" value="ECO:0007669"/>
    <property type="project" value="TreeGrafter"/>
</dbReference>
<dbReference type="GO" id="GO:0070181">
    <property type="term" value="F:small ribosomal subunit rRNA binding"/>
    <property type="evidence" value="ECO:0007669"/>
    <property type="project" value="TreeGrafter"/>
</dbReference>
<dbReference type="GO" id="GO:0003735">
    <property type="term" value="F:structural constituent of ribosome"/>
    <property type="evidence" value="ECO:0007669"/>
    <property type="project" value="InterPro"/>
</dbReference>
<dbReference type="GO" id="GO:0006412">
    <property type="term" value="P:translation"/>
    <property type="evidence" value="ECO:0007669"/>
    <property type="project" value="UniProtKB-UniRule"/>
</dbReference>
<dbReference type="FunFam" id="1.20.58.110:FF:000001">
    <property type="entry name" value="30S ribosomal protein S20"/>
    <property type="match status" value="1"/>
</dbReference>
<dbReference type="Gene3D" id="1.20.58.110">
    <property type="entry name" value="Ribosomal protein S20"/>
    <property type="match status" value="1"/>
</dbReference>
<dbReference type="HAMAP" id="MF_00500">
    <property type="entry name" value="Ribosomal_bS20"/>
    <property type="match status" value="1"/>
</dbReference>
<dbReference type="InterPro" id="IPR002583">
    <property type="entry name" value="Ribosomal_bS20"/>
</dbReference>
<dbReference type="InterPro" id="IPR036510">
    <property type="entry name" value="Ribosomal_bS20_sf"/>
</dbReference>
<dbReference type="NCBIfam" id="TIGR00029">
    <property type="entry name" value="S20"/>
    <property type="match status" value="1"/>
</dbReference>
<dbReference type="PANTHER" id="PTHR33398">
    <property type="entry name" value="30S RIBOSOMAL PROTEIN S20"/>
    <property type="match status" value="1"/>
</dbReference>
<dbReference type="PANTHER" id="PTHR33398:SF1">
    <property type="entry name" value="SMALL RIBOSOMAL SUBUNIT PROTEIN BS20C"/>
    <property type="match status" value="1"/>
</dbReference>
<dbReference type="Pfam" id="PF01649">
    <property type="entry name" value="Ribosomal_S20p"/>
    <property type="match status" value="1"/>
</dbReference>
<dbReference type="SUPFAM" id="SSF46992">
    <property type="entry name" value="Ribosomal protein S20"/>
    <property type="match status" value="1"/>
</dbReference>
<organism>
    <name type="scientific">Sphingopyxis alaskensis (strain DSM 13593 / LMG 18877 / RB2256)</name>
    <name type="common">Sphingomonas alaskensis</name>
    <dbReference type="NCBI Taxonomy" id="317655"/>
    <lineage>
        <taxon>Bacteria</taxon>
        <taxon>Pseudomonadati</taxon>
        <taxon>Pseudomonadota</taxon>
        <taxon>Alphaproteobacteria</taxon>
        <taxon>Sphingomonadales</taxon>
        <taxon>Sphingomonadaceae</taxon>
        <taxon>Sphingopyxis</taxon>
    </lineage>
</organism>
<keyword id="KW-1185">Reference proteome</keyword>
<keyword id="KW-0687">Ribonucleoprotein</keyword>
<keyword id="KW-0689">Ribosomal protein</keyword>
<keyword id="KW-0694">RNA-binding</keyword>
<keyword id="KW-0699">rRNA-binding</keyword>
<comment type="function">
    <text evidence="1">Binds directly to 16S ribosomal RNA.</text>
</comment>
<comment type="similarity">
    <text evidence="1">Belongs to the bacterial ribosomal protein bS20 family.</text>
</comment>